<proteinExistence type="inferred from homology"/>
<sequence>MSKEELLEFPGVVTELLPNATFRVKLENEHEIIAHTAGKMRKNRIRVLAGDKVLVEMTPYDLTKGRITYRFK</sequence>
<organism>
    <name type="scientific">Parvibaculum lavamentivorans (strain DS-1 / DSM 13023 / NCIMB 13966)</name>
    <dbReference type="NCBI Taxonomy" id="402881"/>
    <lineage>
        <taxon>Bacteria</taxon>
        <taxon>Pseudomonadati</taxon>
        <taxon>Pseudomonadota</taxon>
        <taxon>Alphaproteobacteria</taxon>
        <taxon>Hyphomicrobiales</taxon>
        <taxon>Parvibaculaceae</taxon>
        <taxon>Parvibaculum</taxon>
    </lineage>
</organism>
<feature type="chain" id="PRO_0000338878" description="Translation initiation factor IF-1">
    <location>
        <begin position="1"/>
        <end position="72"/>
    </location>
</feature>
<feature type="domain" description="S1-like" evidence="1">
    <location>
        <begin position="1"/>
        <end position="72"/>
    </location>
</feature>
<comment type="function">
    <text evidence="1">One of the essential components for the initiation of protein synthesis. Stabilizes the binding of IF-2 and IF-3 on the 30S subunit to which N-formylmethionyl-tRNA(fMet) subsequently binds. Helps modulate mRNA selection, yielding the 30S pre-initiation complex (PIC). Upon addition of the 50S ribosomal subunit IF-1, IF-2 and IF-3 are released leaving the mature 70S translation initiation complex.</text>
</comment>
<comment type="subunit">
    <text evidence="1">Component of the 30S ribosomal translation pre-initiation complex which assembles on the 30S ribosome in the order IF-2 and IF-3, IF-1 and N-formylmethionyl-tRNA(fMet); mRNA recruitment can occur at any time during PIC assembly.</text>
</comment>
<comment type="subcellular location">
    <subcellularLocation>
        <location evidence="1">Cytoplasm</location>
    </subcellularLocation>
</comment>
<comment type="similarity">
    <text evidence="1">Belongs to the IF-1 family.</text>
</comment>
<reference key="1">
    <citation type="journal article" date="2011" name="Stand. Genomic Sci.">
        <title>Complete genome sequence of Parvibaculum lavamentivorans type strain (DS-1(T)).</title>
        <authorList>
            <person name="Schleheck D."/>
            <person name="Weiss M."/>
            <person name="Pitluck S."/>
            <person name="Bruce D."/>
            <person name="Land M.L."/>
            <person name="Han S."/>
            <person name="Saunders E."/>
            <person name="Tapia R."/>
            <person name="Detter C."/>
            <person name="Brettin T."/>
            <person name="Han J."/>
            <person name="Woyke T."/>
            <person name="Goodwin L."/>
            <person name="Pennacchio L."/>
            <person name="Nolan M."/>
            <person name="Cook A.M."/>
            <person name="Kjelleberg S."/>
            <person name="Thomas T."/>
        </authorList>
    </citation>
    <scope>NUCLEOTIDE SEQUENCE [LARGE SCALE GENOMIC DNA]</scope>
    <source>
        <strain>DS-1 / DSM 13023 / NCIMB 13966</strain>
    </source>
</reference>
<name>IF1_PARL1</name>
<evidence type="ECO:0000255" key="1">
    <source>
        <dbReference type="HAMAP-Rule" id="MF_00075"/>
    </source>
</evidence>
<protein>
    <recommendedName>
        <fullName evidence="1">Translation initiation factor IF-1</fullName>
    </recommendedName>
</protein>
<dbReference type="EMBL" id="CP000774">
    <property type="protein sequence ID" value="ABS62149.1"/>
    <property type="molecule type" value="Genomic_DNA"/>
</dbReference>
<dbReference type="RefSeq" id="WP_011995440.1">
    <property type="nucleotide sequence ID" value="NC_009719.1"/>
</dbReference>
<dbReference type="SMR" id="A7HQG6"/>
<dbReference type="STRING" id="402881.Plav_0526"/>
<dbReference type="KEGG" id="pla:Plav_0526"/>
<dbReference type="eggNOG" id="COG0361">
    <property type="taxonomic scope" value="Bacteria"/>
</dbReference>
<dbReference type="HOGENOM" id="CLU_151267_1_0_5"/>
<dbReference type="OrthoDB" id="9803250at2"/>
<dbReference type="Proteomes" id="UP000006377">
    <property type="component" value="Chromosome"/>
</dbReference>
<dbReference type="GO" id="GO:0005829">
    <property type="term" value="C:cytosol"/>
    <property type="evidence" value="ECO:0007669"/>
    <property type="project" value="TreeGrafter"/>
</dbReference>
<dbReference type="GO" id="GO:0043022">
    <property type="term" value="F:ribosome binding"/>
    <property type="evidence" value="ECO:0007669"/>
    <property type="project" value="UniProtKB-UniRule"/>
</dbReference>
<dbReference type="GO" id="GO:0019843">
    <property type="term" value="F:rRNA binding"/>
    <property type="evidence" value="ECO:0007669"/>
    <property type="project" value="UniProtKB-UniRule"/>
</dbReference>
<dbReference type="GO" id="GO:0003743">
    <property type="term" value="F:translation initiation factor activity"/>
    <property type="evidence" value="ECO:0007669"/>
    <property type="project" value="UniProtKB-UniRule"/>
</dbReference>
<dbReference type="CDD" id="cd04451">
    <property type="entry name" value="S1_IF1"/>
    <property type="match status" value="1"/>
</dbReference>
<dbReference type="FunFam" id="2.40.50.140:FF:000002">
    <property type="entry name" value="Translation initiation factor IF-1"/>
    <property type="match status" value="1"/>
</dbReference>
<dbReference type="Gene3D" id="2.40.50.140">
    <property type="entry name" value="Nucleic acid-binding proteins"/>
    <property type="match status" value="1"/>
</dbReference>
<dbReference type="HAMAP" id="MF_00075">
    <property type="entry name" value="IF_1"/>
    <property type="match status" value="1"/>
</dbReference>
<dbReference type="InterPro" id="IPR012340">
    <property type="entry name" value="NA-bd_OB-fold"/>
</dbReference>
<dbReference type="InterPro" id="IPR006196">
    <property type="entry name" value="RNA-binding_domain_S1_IF1"/>
</dbReference>
<dbReference type="InterPro" id="IPR004368">
    <property type="entry name" value="TIF_IF1"/>
</dbReference>
<dbReference type="NCBIfam" id="TIGR00008">
    <property type="entry name" value="infA"/>
    <property type="match status" value="1"/>
</dbReference>
<dbReference type="PANTHER" id="PTHR33370">
    <property type="entry name" value="TRANSLATION INITIATION FACTOR IF-1, CHLOROPLASTIC"/>
    <property type="match status" value="1"/>
</dbReference>
<dbReference type="PANTHER" id="PTHR33370:SF1">
    <property type="entry name" value="TRANSLATION INITIATION FACTOR IF-1, CHLOROPLASTIC"/>
    <property type="match status" value="1"/>
</dbReference>
<dbReference type="Pfam" id="PF01176">
    <property type="entry name" value="eIF-1a"/>
    <property type="match status" value="1"/>
</dbReference>
<dbReference type="SUPFAM" id="SSF50249">
    <property type="entry name" value="Nucleic acid-binding proteins"/>
    <property type="match status" value="1"/>
</dbReference>
<dbReference type="PROSITE" id="PS50832">
    <property type="entry name" value="S1_IF1_TYPE"/>
    <property type="match status" value="1"/>
</dbReference>
<gene>
    <name evidence="1" type="primary">infA</name>
    <name type="ordered locus">Plav_0526</name>
</gene>
<keyword id="KW-0963">Cytoplasm</keyword>
<keyword id="KW-0396">Initiation factor</keyword>
<keyword id="KW-0648">Protein biosynthesis</keyword>
<keyword id="KW-1185">Reference proteome</keyword>
<keyword id="KW-0694">RNA-binding</keyword>
<keyword id="KW-0699">rRNA-binding</keyword>
<accession>A7HQG6</accession>